<reference evidence="7" key="1">
    <citation type="journal article" date="2016" name="Ticks Tick Borne Dis.">
        <title>Identification and the preliminary in vitro characterization of IRIS homologue from salivary glands of Ixodes persulcatus Schulze.</title>
        <authorList>
            <person name="Toyomane K."/>
            <person name="Konnai S."/>
            <person name="Niwa A."/>
            <person name="Githaka N."/>
            <person name="Isezaki M."/>
            <person name="Yamada S."/>
            <person name="Ito T."/>
            <person name="Takano A."/>
            <person name="Ando S."/>
            <person name="Kawabata H."/>
            <person name="Murata S."/>
            <person name="Ohashi K."/>
        </authorList>
    </citation>
    <scope>NUCLEOTIDE SEQUENCE [MRNA]</scope>
    <scope>FUNCTION</scope>
    <scope>TISSUE SPECIFICITY</scope>
    <scope>INDUCTION</scope>
</reference>
<sequence>MEASLSNHILNFSVDLYKQLKPSGKDTAGNVFCSPFSIAAALSMALAGARGNTAKQIAAILHTNDDKIHDHFSNFLRKLPSYAPDVALHIANRMYSEQTFHLKAEYTTLLQKSYDSTIKAVDFAGNADRVRLEVNAWVEEVTRSKIRDLLAPGTVDALTSLILVNAIYFKGLWECQFKPSATKPGDFHLTPQTSKTVDMMHQKGDFKMGHCSDLKVTALEIPYKGNKTSMVILLPKDVEGLSVLEEHLTAPKLSALLGGMYVTSDVYLRLPKFKLEQSIGLKDVLMAMGVKDFFTSLADLSGISATGNLCASDVIHKAFVEVNEEGTEAAAANAIRLRYMCLRFPQVINFFVDRPFMFLIHSHDPDVVLFMGSIREL</sequence>
<proteinExistence type="evidence at transcript level"/>
<keyword id="KW-0325">Glycoprotein</keyword>
<keyword id="KW-0391">Immunity</keyword>
<keyword id="KW-0646">Protease inhibitor</keyword>
<keyword id="KW-0964">Secreted</keyword>
<keyword id="KW-0722">Serine protease inhibitor</keyword>
<accession>A0A090BX51</accession>
<gene>
    <name evidence="5" type="primary">Ipis-1</name>
</gene>
<evidence type="ECO:0000250" key="1">
    <source>
        <dbReference type="UniProtKB" id="Q9GP13"/>
    </source>
</evidence>
<evidence type="ECO:0000255" key="2"/>
<evidence type="ECO:0000255" key="3">
    <source>
        <dbReference type="PROSITE-ProRule" id="PRU00498"/>
    </source>
</evidence>
<evidence type="ECO:0000269" key="4">
    <source>
    </source>
</evidence>
<evidence type="ECO:0000303" key="5">
    <source>
    </source>
</evidence>
<evidence type="ECO:0000305" key="6"/>
<evidence type="ECO:0000312" key="7">
    <source>
        <dbReference type="EMBL" id="BAP59746.1"/>
    </source>
</evidence>
<protein>
    <recommendedName>
        <fullName evidence="5">Ipis-1</fullName>
    </recommendedName>
    <alternativeName>
        <fullName evidence="7">Persulcatus immunosuppressant-1</fullName>
    </alternativeName>
</protein>
<organism evidence="7">
    <name type="scientific">Ixodes persulcatus</name>
    <name type="common">Taiga tick</name>
    <dbReference type="NCBI Taxonomy" id="34615"/>
    <lineage>
        <taxon>Eukaryota</taxon>
        <taxon>Metazoa</taxon>
        <taxon>Ecdysozoa</taxon>
        <taxon>Arthropoda</taxon>
        <taxon>Chelicerata</taxon>
        <taxon>Arachnida</taxon>
        <taxon>Acari</taxon>
        <taxon>Parasitiformes</taxon>
        <taxon>Ixodida</taxon>
        <taxon>Ixodoidea</taxon>
        <taxon>Ixodidae</taxon>
        <taxon>Ixodinae</taxon>
        <taxon>Ixodes</taxon>
    </lineage>
</organism>
<name>IPIS1_IXOPE</name>
<feature type="chain" id="PRO_0000460386" description="Ipis-1" evidence="2">
    <location>
        <begin position="1"/>
        <end position="377"/>
    </location>
</feature>
<feature type="glycosylation site" description="N-linked (GlcNAc...) asparagine" evidence="3">
    <location>
        <position position="11"/>
    </location>
</feature>
<feature type="glycosylation site" description="N-linked (GlcNAc...) asparagine" evidence="3">
    <location>
        <position position="226"/>
    </location>
</feature>
<comment type="function">
    <text evidence="4">Salivary protein with immunosuppressive properties that can modulate blood feeding of ticks on vertebrate species (PubMed:26460162). Inhibits proliferation of bovine peripheral blood mononuclear cells (PBMCs) (PubMed:26460162). Inhibits IFN-gamma (IFNG) production by bovine PBMCs (PubMed:26460162).</text>
</comment>
<comment type="subcellular location">
    <subcellularLocation>
        <location evidence="1">Secreted</location>
    </subcellularLocation>
</comment>
<comment type="tissue specificity">
    <text evidence="4">Female salivary gland (PubMed:26460162). Not detected in midgut and other tissues (PubMed:26460162).</text>
</comment>
<comment type="induction">
    <text evidence="4">Blood feeding does not affect expression in salivary gland.</text>
</comment>
<comment type="similarity">
    <text evidence="6">Belongs to the serpin family.</text>
</comment>
<dbReference type="EMBL" id="AB971750">
    <property type="protein sequence ID" value="BAP59746.1"/>
    <property type="molecule type" value="mRNA"/>
</dbReference>
<dbReference type="SMR" id="A0A090BX51"/>
<dbReference type="MEROPS" id="I04.076"/>
<dbReference type="VEuPathDB" id="VectorBase:IPEI_021120"/>
<dbReference type="GO" id="GO:0005615">
    <property type="term" value="C:extracellular space"/>
    <property type="evidence" value="ECO:0007669"/>
    <property type="project" value="InterPro"/>
</dbReference>
<dbReference type="GO" id="GO:0004867">
    <property type="term" value="F:serine-type endopeptidase inhibitor activity"/>
    <property type="evidence" value="ECO:0007669"/>
    <property type="project" value="UniProtKB-KW"/>
</dbReference>
<dbReference type="GO" id="GO:0002376">
    <property type="term" value="P:immune system process"/>
    <property type="evidence" value="ECO:0007669"/>
    <property type="project" value="UniProtKB-KW"/>
</dbReference>
<dbReference type="CDD" id="cd00172">
    <property type="entry name" value="serpin"/>
    <property type="match status" value="1"/>
</dbReference>
<dbReference type="Gene3D" id="2.30.39.10">
    <property type="entry name" value="Alpha-1-antitrypsin, domain 1"/>
    <property type="match status" value="1"/>
</dbReference>
<dbReference type="Gene3D" id="3.30.497.10">
    <property type="entry name" value="Antithrombin, subunit I, domain 2"/>
    <property type="match status" value="1"/>
</dbReference>
<dbReference type="InterPro" id="IPR023795">
    <property type="entry name" value="Serpin_CS"/>
</dbReference>
<dbReference type="InterPro" id="IPR023796">
    <property type="entry name" value="Serpin_dom"/>
</dbReference>
<dbReference type="InterPro" id="IPR000215">
    <property type="entry name" value="Serpin_fam"/>
</dbReference>
<dbReference type="InterPro" id="IPR036186">
    <property type="entry name" value="Serpin_sf"/>
</dbReference>
<dbReference type="InterPro" id="IPR042178">
    <property type="entry name" value="Serpin_sf_1"/>
</dbReference>
<dbReference type="InterPro" id="IPR042185">
    <property type="entry name" value="Serpin_sf_2"/>
</dbReference>
<dbReference type="PANTHER" id="PTHR11461:SF211">
    <property type="entry name" value="GH10112P-RELATED"/>
    <property type="match status" value="1"/>
</dbReference>
<dbReference type="PANTHER" id="PTHR11461">
    <property type="entry name" value="SERINE PROTEASE INHIBITOR, SERPIN"/>
    <property type="match status" value="1"/>
</dbReference>
<dbReference type="Pfam" id="PF00079">
    <property type="entry name" value="Serpin"/>
    <property type="match status" value="1"/>
</dbReference>
<dbReference type="SMART" id="SM00093">
    <property type="entry name" value="SERPIN"/>
    <property type="match status" value="1"/>
</dbReference>
<dbReference type="SUPFAM" id="SSF56574">
    <property type="entry name" value="Serpins"/>
    <property type="match status" value="1"/>
</dbReference>
<dbReference type="PROSITE" id="PS00284">
    <property type="entry name" value="SERPIN"/>
    <property type="match status" value="1"/>
</dbReference>